<gene>
    <name type="primary">GAPC</name>
</gene>
<proteinExistence type="evidence at transcript level"/>
<protein>
    <recommendedName>
        <fullName>Glyceraldehyde-3-phosphate dehydrogenase 2, cytosolic</fullName>
        <ecNumber>1.2.1.12</ecNumber>
    </recommendedName>
</protein>
<feature type="chain" id="PRO_0000145603" description="Glyceraldehyde-3-phosphate dehydrogenase 2, cytosolic">
    <location>
        <begin position="1" status="less than"/>
        <end position="305"/>
    </location>
</feature>
<feature type="active site" description="Nucleophile" evidence="2">
    <location>
        <position position="122"/>
    </location>
</feature>
<feature type="binding site" evidence="1">
    <location>
        <position position="3"/>
    </location>
    <ligand>
        <name>NAD(+)</name>
        <dbReference type="ChEBI" id="CHEBI:57540"/>
    </ligand>
</feature>
<feature type="binding site" evidence="1">
    <location>
        <position position="50"/>
    </location>
    <ligand>
        <name>NAD(+)</name>
        <dbReference type="ChEBI" id="CHEBI:57540"/>
    </ligand>
</feature>
<feature type="binding site" evidence="1">
    <location>
        <begin position="121"/>
        <end position="123"/>
    </location>
    <ligand>
        <name>D-glyceraldehyde 3-phosphate</name>
        <dbReference type="ChEBI" id="CHEBI:59776"/>
    </ligand>
</feature>
<feature type="binding site" evidence="1">
    <location>
        <position position="152"/>
    </location>
    <ligand>
        <name>D-glyceraldehyde 3-phosphate</name>
        <dbReference type="ChEBI" id="CHEBI:59776"/>
    </ligand>
</feature>
<feature type="binding site" evidence="1">
    <location>
        <begin position="181"/>
        <end position="182"/>
    </location>
    <ligand>
        <name>D-glyceraldehyde 3-phosphate</name>
        <dbReference type="ChEBI" id="CHEBI:59776"/>
    </ligand>
</feature>
<feature type="binding site" evidence="1">
    <location>
        <position position="204"/>
    </location>
    <ligand>
        <name>D-glyceraldehyde 3-phosphate</name>
        <dbReference type="ChEBI" id="CHEBI:59776"/>
    </ligand>
</feature>
<feature type="binding site" evidence="1">
    <location>
        <position position="286"/>
    </location>
    <ligand>
        <name>NAD(+)</name>
        <dbReference type="ChEBI" id="CHEBI:57540"/>
    </ligand>
</feature>
<feature type="site" description="Activates thiol group during catalysis" evidence="1">
    <location>
        <position position="149"/>
    </location>
</feature>
<feature type="non-terminal residue">
    <location>
        <position position="1"/>
    </location>
</feature>
<organism>
    <name type="scientific">Hordeum vulgare</name>
    <name type="common">Barley</name>
    <dbReference type="NCBI Taxonomy" id="4513"/>
    <lineage>
        <taxon>Eukaryota</taxon>
        <taxon>Viridiplantae</taxon>
        <taxon>Streptophyta</taxon>
        <taxon>Embryophyta</taxon>
        <taxon>Tracheophyta</taxon>
        <taxon>Spermatophyta</taxon>
        <taxon>Magnoliopsida</taxon>
        <taxon>Liliopsida</taxon>
        <taxon>Poales</taxon>
        <taxon>Poaceae</taxon>
        <taxon>BOP clade</taxon>
        <taxon>Pooideae</taxon>
        <taxon>Triticodae</taxon>
        <taxon>Triticeae</taxon>
        <taxon>Hordeinae</taxon>
        <taxon>Hordeum</taxon>
    </lineage>
</organism>
<keyword id="KW-0963">Cytoplasm</keyword>
<keyword id="KW-0324">Glycolysis</keyword>
<keyword id="KW-0520">NAD</keyword>
<keyword id="KW-0560">Oxidoreductase</keyword>
<dbReference type="EC" id="1.2.1.12"/>
<dbReference type="EMBL" id="M36650">
    <property type="protein sequence ID" value="AAA32956.1"/>
    <property type="molecule type" value="mRNA"/>
</dbReference>
<dbReference type="PIR" id="A24159">
    <property type="entry name" value="A24159"/>
</dbReference>
<dbReference type="SMR" id="P08477"/>
<dbReference type="IntAct" id="P08477">
    <property type="interactions" value="1"/>
</dbReference>
<dbReference type="UniPathway" id="UPA00109">
    <property type="reaction ID" value="UER00184"/>
</dbReference>
<dbReference type="ExpressionAtlas" id="P08477">
    <property type="expression patterns" value="baseline and differential"/>
</dbReference>
<dbReference type="GO" id="GO:0005829">
    <property type="term" value="C:cytosol"/>
    <property type="evidence" value="ECO:0007669"/>
    <property type="project" value="TreeGrafter"/>
</dbReference>
<dbReference type="GO" id="GO:0004365">
    <property type="term" value="F:glyceraldehyde-3-phosphate dehydrogenase (NAD+) (phosphorylating) activity"/>
    <property type="evidence" value="ECO:0007669"/>
    <property type="project" value="UniProtKB-EC"/>
</dbReference>
<dbReference type="GO" id="GO:0051287">
    <property type="term" value="F:NAD binding"/>
    <property type="evidence" value="ECO:0007669"/>
    <property type="project" value="InterPro"/>
</dbReference>
<dbReference type="GO" id="GO:0050661">
    <property type="term" value="F:NADP binding"/>
    <property type="evidence" value="ECO:0007669"/>
    <property type="project" value="InterPro"/>
</dbReference>
<dbReference type="GO" id="GO:0006006">
    <property type="term" value="P:glucose metabolic process"/>
    <property type="evidence" value="ECO:0007669"/>
    <property type="project" value="InterPro"/>
</dbReference>
<dbReference type="GO" id="GO:0006096">
    <property type="term" value="P:glycolytic process"/>
    <property type="evidence" value="ECO:0007669"/>
    <property type="project" value="UniProtKB-UniPathway"/>
</dbReference>
<dbReference type="CDD" id="cd18126">
    <property type="entry name" value="GAPDH_I_C"/>
    <property type="match status" value="1"/>
</dbReference>
<dbReference type="CDD" id="cd05214">
    <property type="entry name" value="GAPDH_I_N"/>
    <property type="match status" value="1"/>
</dbReference>
<dbReference type="FunFam" id="3.30.360.10:FF:000001">
    <property type="entry name" value="Glyceraldehyde-3-phosphate dehydrogenase"/>
    <property type="match status" value="1"/>
</dbReference>
<dbReference type="FunFam" id="3.40.50.720:FF:000266">
    <property type="entry name" value="Glyceraldehyde-3-phosphate dehydrogenase"/>
    <property type="match status" value="1"/>
</dbReference>
<dbReference type="Gene3D" id="3.30.360.10">
    <property type="entry name" value="Dihydrodipicolinate Reductase, domain 2"/>
    <property type="match status" value="1"/>
</dbReference>
<dbReference type="Gene3D" id="3.40.50.720">
    <property type="entry name" value="NAD(P)-binding Rossmann-like Domain"/>
    <property type="match status" value="1"/>
</dbReference>
<dbReference type="InterPro" id="IPR020831">
    <property type="entry name" value="GlycerAld/Erythrose_P_DH"/>
</dbReference>
<dbReference type="InterPro" id="IPR020829">
    <property type="entry name" value="GlycerAld_3-P_DH_cat"/>
</dbReference>
<dbReference type="InterPro" id="IPR020828">
    <property type="entry name" value="GlycerAld_3-P_DH_NAD(P)-bd"/>
</dbReference>
<dbReference type="InterPro" id="IPR006424">
    <property type="entry name" value="Glyceraldehyde-3-P_DH_1"/>
</dbReference>
<dbReference type="InterPro" id="IPR036291">
    <property type="entry name" value="NAD(P)-bd_dom_sf"/>
</dbReference>
<dbReference type="NCBIfam" id="TIGR01534">
    <property type="entry name" value="GAPDH-I"/>
    <property type="match status" value="1"/>
</dbReference>
<dbReference type="PANTHER" id="PTHR10836">
    <property type="entry name" value="GLYCERALDEHYDE 3-PHOSPHATE DEHYDROGENASE"/>
    <property type="match status" value="1"/>
</dbReference>
<dbReference type="PANTHER" id="PTHR10836:SF112">
    <property type="entry name" value="GLYCERALDEHYDE-3-PHOSPHATE DEHYDROGENASE GAPC1, CYTOSOLIC-RELATED"/>
    <property type="match status" value="1"/>
</dbReference>
<dbReference type="Pfam" id="PF02800">
    <property type="entry name" value="Gp_dh_C"/>
    <property type="match status" value="1"/>
</dbReference>
<dbReference type="Pfam" id="PF00044">
    <property type="entry name" value="Gp_dh_N"/>
    <property type="match status" value="1"/>
</dbReference>
<dbReference type="PIRSF" id="PIRSF000149">
    <property type="entry name" value="GAP_DH"/>
    <property type="match status" value="1"/>
</dbReference>
<dbReference type="PRINTS" id="PR00078">
    <property type="entry name" value="G3PDHDRGNASE"/>
</dbReference>
<dbReference type="SMART" id="SM00846">
    <property type="entry name" value="Gp_dh_N"/>
    <property type="match status" value="1"/>
</dbReference>
<dbReference type="SUPFAM" id="SSF55347">
    <property type="entry name" value="Glyceraldehyde-3-phosphate dehydrogenase-like, C-terminal domain"/>
    <property type="match status" value="1"/>
</dbReference>
<dbReference type="SUPFAM" id="SSF51735">
    <property type="entry name" value="NAD(P)-binding Rossmann-fold domains"/>
    <property type="match status" value="1"/>
</dbReference>
<reference key="1">
    <citation type="journal article" date="1986" name="Carlsberg Res. Commun.">
        <title>Identification and characterisation of a cDNA clone for cytosolic glyceraldehyde-3-phosphate dehydrogenase in barley.</title>
        <authorList>
            <person name="Chojecki J."/>
        </authorList>
    </citation>
    <scope>NUCLEOTIDE SEQUENCE [MRNA]</scope>
</reference>
<name>G3PC2_HORVU</name>
<comment type="function">
    <text evidence="1">Key enzyme in glycolysis that catalyzes the first step of the pathway by converting D-glyceraldehyde 3-phosphate (G3P) into 3-phospho-D-glyceroyl phosphate. Essential for the maintenance of cellular ATP levels and carbohydrate metabolism (By similarity).</text>
</comment>
<comment type="catalytic activity">
    <reaction evidence="2">
        <text>D-glyceraldehyde 3-phosphate + phosphate + NAD(+) = (2R)-3-phospho-glyceroyl phosphate + NADH + H(+)</text>
        <dbReference type="Rhea" id="RHEA:10300"/>
        <dbReference type="ChEBI" id="CHEBI:15378"/>
        <dbReference type="ChEBI" id="CHEBI:43474"/>
        <dbReference type="ChEBI" id="CHEBI:57540"/>
        <dbReference type="ChEBI" id="CHEBI:57604"/>
        <dbReference type="ChEBI" id="CHEBI:57945"/>
        <dbReference type="ChEBI" id="CHEBI:59776"/>
        <dbReference type="EC" id="1.2.1.12"/>
    </reaction>
</comment>
<comment type="pathway">
    <text>Carbohydrate degradation; glycolysis; pyruvate from D-glyceraldehyde 3-phosphate: step 1/5.</text>
</comment>
<comment type="subunit">
    <text evidence="1">Homotetramer.</text>
</comment>
<comment type="subcellular location">
    <subcellularLocation>
        <location evidence="1">Cytoplasm</location>
    </subcellularLocation>
</comment>
<comment type="miscellaneous">
    <text>Plants contain two types of GAPDH: cytosolic forms which participate in glycolysis and chloroplast forms which participate in photosynthesis. All the forms are encoded by distinct genes.</text>
</comment>
<comment type="similarity">
    <text evidence="3">Belongs to the glyceraldehyde-3-phosphate dehydrogenase family.</text>
</comment>
<sequence length="305" mass="33236">VNDPFITTDYMTYMFKYDTVHGQWKHHEVKVKDSKTLLFGEKEVAVFGCRNPEEIPWAAAGAEYVVESTGVFTDKDKAAAHIKGGAKKVIISAPSKDAPMFVCGVNEKEYKSDIDIVSNASCTTNCPAPLAKVINDRFGIVEGLMTTVHAMTATQKTVDGPSSKDWRGGRAASFNIIPSSTGAAKAVGKVLPELNGKLTGMAFRVPTVDVSVVDLTVRLAKPATYEQIKAAIKEESEGNLKGILGYVDEDLVSTDFQGDSRSSIFDAKAGIALNDNFVKLVSWYDNEWGYSTRVVDLIRHMHSTK</sequence>
<evidence type="ECO:0000250" key="1"/>
<evidence type="ECO:0000255" key="2">
    <source>
        <dbReference type="PROSITE-ProRule" id="PRU10009"/>
    </source>
</evidence>
<evidence type="ECO:0000305" key="3"/>
<accession>P08477</accession>